<accession>P28014</accession>
<accession>Q40370</accession>
<reference key="1">
    <citation type="submission" date="1996-07" db="EMBL/GenBank/DDBJ databases">
        <authorList>
            <person name="Scecsi J."/>
            <person name="Nemeth K."/>
            <person name="Dudits D."/>
            <person name="Gyorgyey J."/>
        </authorList>
    </citation>
    <scope>NUCLEOTIDE SEQUENCE [MRNA]</scope>
    <source>
        <strain>cv. RA3</strain>
        <tissue>Callus</tissue>
    </source>
</reference>
<reference key="2">
    <citation type="journal article" date="1992" name="Plant Mol. Biol.">
        <title>An alfalfa cDNA encodes a protein with homology to translationally controlled human tumor protein.</title>
        <authorList>
            <person name="Pay A."/>
            <person name="Heberle-Bors E."/>
            <person name="Hirt H."/>
        </authorList>
    </citation>
    <scope>NUCLEOTIDE SEQUENCE [MRNA] OF 11-167</scope>
    <source>
        <strain>cv. RA3</strain>
    </source>
</reference>
<keyword id="KW-0106">Calcium</keyword>
<keyword id="KW-0963">Cytoplasm</keyword>
<protein>
    <recommendedName>
        <fullName>Translationally-controlled tumor protein homolog</fullName>
        <shortName>TCTP</shortName>
    </recommendedName>
</protein>
<dbReference type="EMBL" id="X98618">
    <property type="protein sequence ID" value="CAA67207.1"/>
    <property type="molecule type" value="mRNA"/>
</dbReference>
<dbReference type="EMBL" id="X63872">
    <property type="protein sequence ID" value="CAA45349.1"/>
    <property type="molecule type" value="mRNA"/>
</dbReference>
<dbReference type="PIR" id="S22489">
    <property type="entry name" value="S22489"/>
</dbReference>
<dbReference type="PIR" id="T09686">
    <property type="entry name" value="T09686"/>
</dbReference>
<dbReference type="SMR" id="P28014"/>
<dbReference type="GO" id="GO:0005737">
    <property type="term" value="C:cytoplasm"/>
    <property type="evidence" value="ECO:0007669"/>
    <property type="project" value="UniProtKB-SubCell"/>
</dbReference>
<dbReference type="GO" id="GO:0005509">
    <property type="term" value="F:calcium ion binding"/>
    <property type="evidence" value="ECO:0007669"/>
    <property type="project" value="TreeGrafter"/>
</dbReference>
<dbReference type="FunFam" id="2.170.150.10:FF:000003">
    <property type="entry name" value="Translationally-controlled tumor protein homolog"/>
    <property type="match status" value="1"/>
</dbReference>
<dbReference type="Gene3D" id="2.170.150.10">
    <property type="entry name" value="Metal Binding Protein, Guanine Nucleotide Exchange Factor, Chain A"/>
    <property type="match status" value="1"/>
</dbReference>
<dbReference type="InterPro" id="IPR011057">
    <property type="entry name" value="Mss4-like_sf"/>
</dbReference>
<dbReference type="InterPro" id="IPR011323">
    <property type="entry name" value="Mss4/transl-control_tumour"/>
</dbReference>
<dbReference type="InterPro" id="IPR034737">
    <property type="entry name" value="TCTP"/>
</dbReference>
<dbReference type="InterPro" id="IPR018103">
    <property type="entry name" value="Translation_control_tumour_CS"/>
</dbReference>
<dbReference type="InterPro" id="IPR018105">
    <property type="entry name" value="Translational_control_tumour_p"/>
</dbReference>
<dbReference type="PANTHER" id="PTHR11991">
    <property type="entry name" value="TRANSLATIONALLY CONTROLLED TUMOR PROTEIN-RELATED"/>
    <property type="match status" value="1"/>
</dbReference>
<dbReference type="PANTHER" id="PTHR11991:SF19">
    <property type="entry name" value="TRANSLATIONALLY CONTROLLED TUMOR PROTEIN-RELATED"/>
    <property type="match status" value="1"/>
</dbReference>
<dbReference type="Pfam" id="PF00838">
    <property type="entry name" value="TCTP"/>
    <property type="match status" value="1"/>
</dbReference>
<dbReference type="PRINTS" id="PR01653">
    <property type="entry name" value="TCTPROTEIN"/>
</dbReference>
<dbReference type="SUPFAM" id="SSF51316">
    <property type="entry name" value="Mss4-like"/>
    <property type="match status" value="1"/>
</dbReference>
<dbReference type="PROSITE" id="PS01002">
    <property type="entry name" value="TCTP_1"/>
    <property type="match status" value="1"/>
</dbReference>
<dbReference type="PROSITE" id="PS01003">
    <property type="entry name" value="TCTP_2"/>
    <property type="match status" value="1"/>
</dbReference>
<dbReference type="PROSITE" id="PS51797">
    <property type="entry name" value="TCTP_3"/>
    <property type="match status" value="1"/>
</dbReference>
<gene>
    <name type="primary">TCTP</name>
</gene>
<organism>
    <name type="scientific">Medicago sativa</name>
    <name type="common">Alfalfa</name>
    <dbReference type="NCBI Taxonomy" id="3879"/>
    <lineage>
        <taxon>Eukaryota</taxon>
        <taxon>Viridiplantae</taxon>
        <taxon>Streptophyta</taxon>
        <taxon>Embryophyta</taxon>
        <taxon>Tracheophyta</taxon>
        <taxon>Spermatophyta</taxon>
        <taxon>Magnoliopsida</taxon>
        <taxon>eudicotyledons</taxon>
        <taxon>Gunneridae</taxon>
        <taxon>Pentapetalae</taxon>
        <taxon>rosids</taxon>
        <taxon>fabids</taxon>
        <taxon>Fabales</taxon>
        <taxon>Fabaceae</taxon>
        <taxon>Papilionoideae</taxon>
        <taxon>50 kb inversion clade</taxon>
        <taxon>NPAAA clade</taxon>
        <taxon>Hologalegina</taxon>
        <taxon>IRL clade</taxon>
        <taxon>Trifolieae</taxon>
        <taxon>Medicago</taxon>
    </lineage>
</organism>
<evidence type="ECO:0000250" key="1"/>
<evidence type="ECO:0000255" key="2">
    <source>
        <dbReference type="PROSITE-ProRule" id="PRU01133"/>
    </source>
</evidence>
<evidence type="ECO:0000305" key="3"/>
<proteinExistence type="evidence at transcript level"/>
<comment type="function">
    <text evidence="1">Involved in calcium binding and microtubule stabilization.</text>
</comment>
<comment type="subcellular location">
    <subcellularLocation>
        <location evidence="1">Cytoplasm</location>
    </subcellularLocation>
</comment>
<comment type="similarity">
    <text evidence="2">Belongs to the TCTP family.</text>
</comment>
<sequence length="167" mass="18941">MLVYQDLLTGDELLSDSYPYKEIENGMLWEVEGKWVTKGVVEVDIGANASAEGGEDEGVDDTAVKVVDIVDVFRLQEQPAFDKKQFLGFVKRYIKLLTPKLDAEKQELFKKHIEGATKYLLCKLKDLQFFVGESMHDDGSLVFAYYKDGAADPTFLYFAYALKEIKC</sequence>
<feature type="chain" id="PRO_0000211303" description="Translationally-controlled tumor protein homolog">
    <location>
        <begin position="1"/>
        <end position="167"/>
    </location>
</feature>
<feature type="domain" description="TCTP" evidence="2">
    <location>
        <begin position="1"/>
        <end position="167"/>
    </location>
</feature>
<feature type="sequence conflict" description="In Ref. 2; CAA45349." evidence="3" ref="2">
    <original>C</original>
    <variation>G</variation>
    <location>
        <position position="122"/>
    </location>
</feature>
<name>TCTP_MEDSA</name>